<gene>
    <name type="primary">MB</name>
</gene>
<reference key="1">
    <citation type="submission" date="1996-05" db="PIR data bank">
        <title>Primary structure of myoglobin for whiskered auklet.</title>
        <authorList>
            <person name="Miyazaki K."/>
            <person name="Otsuka J."/>
            <person name="Satake K."/>
            <person name="Tsugita A."/>
        </authorList>
    </citation>
    <scope>PROTEIN SEQUENCE OF 2-154</scope>
</reference>
<accession>Q7LZM5</accession>
<evidence type="ECO:0000250" key="1">
    <source>
        <dbReference type="UniProtKB" id="P02144"/>
    </source>
</evidence>
<evidence type="ECO:0000250" key="2">
    <source>
        <dbReference type="UniProtKB" id="P02185"/>
    </source>
</evidence>
<evidence type="ECO:0000250" key="3">
    <source>
        <dbReference type="UniProtKB" id="P02189"/>
    </source>
</evidence>
<evidence type="ECO:0000250" key="4">
    <source>
        <dbReference type="UniProtKB" id="P68082"/>
    </source>
</evidence>
<evidence type="ECO:0000255" key="5">
    <source>
        <dbReference type="PROSITE-ProRule" id="PRU00238"/>
    </source>
</evidence>
<evidence type="ECO:0000269" key="6">
    <source ref="1"/>
</evidence>
<feature type="initiator methionine" description="Removed" evidence="6">
    <location>
        <position position="1"/>
    </location>
</feature>
<feature type="chain" id="PRO_0000053352" description="Myoglobin">
    <location>
        <begin position="2"/>
        <end position="154"/>
    </location>
</feature>
<feature type="domain" description="Globin" evidence="5">
    <location>
        <begin position="2"/>
        <end position="148"/>
    </location>
</feature>
<feature type="binding site" evidence="4">
    <location>
        <position position="65"/>
    </location>
    <ligand>
        <name>nitrite</name>
        <dbReference type="ChEBI" id="CHEBI:16301"/>
    </ligand>
</feature>
<feature type="binding site" evidence="3 5">
    <location>
        <position position="65"/>
    </location>
    <ligand>
        <name>O2</name>
        <dbReference type="ChEBI" id="CHEBI:15379"/>
    </ligand>
</feature>
<feature type="binding site" description="proximal binding residue" evidence="1">
    <location>
        <position position="94"/>
    </location>
    <ligand>
        <name>heme b</name>
        <dbReference type="ChEBI" id="CHEBI:60344"/>
    </ligand>
    <ligandPart>
        <name>Fe</name>
        <dbReference type="ChEBI" id="CHEBI:18248"/>
    </ligandPart>
</feature>
<protein>
    <recommendedName>
        <fullName>Myoglobin</fullName>
    </recommendedName>
    <alternativeName>
        <fullName evidence="1">Nitrite reductase MB</fullName>
        <ecNumber evidence="1">1.7.-.-</ecNumber>
    </alternativeName>
    <alternativeName>
        <fullName evidence="1">Pseudoperoxidase MB</fullName>
        <ecNumber evidence="1">1.11.1.-</ecNumber>
    </alternativeName>
</protein>
<proteinExistence type="evidence at protein level"/>
<name>MYG_AETPY</name>
<comment type="function">
    <text evidence="1">Monomeric heme protein which primary function is to store oxygen and facilitate its diffusion within muscle tissues. Reversibly binds oxygen through a pentacoordinated heme iron and enables its timely and efficient release as needed during periods of heightened demand. Depending on the oxidative conditions of tissues and cells, and in addition to its ability to bind oxygen, it also has a nitrite reductase activity whereby it regulates the production of bioactive nitric oxide. Under stress conditions, like hypoxia and anoxia, it also protects cells against reactive oxygen species thanks to its pseudoperoxidase activity.</text>
</comment>
<comment type="catalytic activity">
    <reaction evidence="1">
        <text>Fe(III)-heme b-[protein] + nitric oxide + H2O = Fe(II)-heme b-[protein] + nitrite + 2 H(+)</text>
        <dbReference type="Rhea" id="RHEA:77711"/>
        <dbReference type="Rhea" id="RHEA-COMP:18975"/>
        <dbReference type="Rhea" id="RHEA-COMP:18976"/>
        <dbReference type="ChEBI" id="CHEBI:15377"/>
        <dbReference type="ChEBI" id="CHEBI:15378"/>
        <dbReference type="ChEBI" id="CHEBI:16301"/>
        <dbReference type="ChEBI" id="CHEBI:16480"/>
        <dbReference type="ChEBI" id="CHEBI:55376"/>
        <dbReference type="ChEBI" id="CHEBI:60344"/>
    </reaction>
    <physiologicalReaction direction="right-to-left" evidence="1">
        <dbReference type="Rhea" id="RHEA:77713"/>
    </physiologicalReaction>
</comment>
<comment type="catalytic activity">
    <reaction evidence="1">
        <text>H2O2 + AH2 = A + 2 H2O</text>
        <dbReference type="Rhea" id="RHEA:30275"/>
        <dbReference type="ChEBI" id="CHEBI:13193"/>
        <dbReference type="ChEBI" id="CHEBI:15377"/>
        <dbReference type="ChEBI" id="CHEBI:16240"/>
        <dbReference type="ChEBI" id="CHEBI:17499"/>
    </reaction>
</comment>
<comment type="subunit">
    <text evidence="2">Monomeric.</text>
</comment>
<comment type="subcellular location">
    <subcellularLocation>
        <location evidence="1">Cytoplasm</location>
        <location evidence="1">Sarcoplasm</location>
    </subcellularLocation>
</comment>
<comment type="similarity">
    <text evidence="5">Belongs to the globin family.</text>
</comment>
<sequence length="154" mass="17418">MGLSDQEWQQVLSIWGKVESDLAGHGHQVLMRLFQDHPETLDRFDKFKGLKTPDQMKGSEDLKKHGVTVLTQLGKILKQKGNHESELKPLAQTHATKHKIPVKYLEFISEAIMKVIAEKHAADFGGDSQAAMKKALELFRNDMASKYKEFGFQG</sequence>
<organism>
    <name type="scientific">Aethia pygmaea</name>
    <name type="common">Whiskered auklet</name>
    <name type="synonym">Alca pygmaea</name>
    <dbReference type="NCBI Taxonomy" id="28687"/>
    <lineage>
        <taxon>Eukaryota</taxon>
        <taxon>Metazoa</taxon>
        <taxon>Chordata</taxon>
        <taxon>Craniata</taxon>
        <taxon>Vertebrata</taxon>
        <taxon>Euteleostomi</taxon>
        <taxon>Archelosauria</taxon>
        <taxon>Archosauria</taxon>
        <taxon>Dinosauria</taxon>
        <taxon>Saurischia</taxon>
        <taxon>Theropoda</taxon>
        <taxon>Coelurosauria</taxon>
        <taxon>Aves</taxon>
        <taxon>Neognathae</taxon>
        <taxon>Neoaves</taxon>
        <taxon>Charadriiformes</taxon>
        <taxon>Alcidae</taxon>
        <taxon>Aethia</taxon>
    </lineage>
</organism>
<dbReference type="EC" id="1.7.-.-" evidence="1"/>
<dbReference type="EC" id="1.11.1.-" evidence="1"/>
<dbReference type="PIR" id="JT0636">
    <property type="entry name" value="JT0636"/>
</dbReference>
<dbReference type="SMR" id="Q7LZM5"/>
<dbReference type="GO" id="GO:0070062">
    <property type="term" value="C:extracellular exosome"/>
    <property type="evidence" value="ECO:0007669"/>
    <property type="project" value="TreeGrafter"/>
</dbReference>
<dbReference type="GO" id="GO:0016528">
    <property type="term" value="C:sarcoplasm"/>
    <property type="evidence" value="ECO:0000250"/>
    <property type="project" value="UniProtKB"/>
</dbReference>
<dbReference type="GO" id="GO:0020037">
    <property type="term" value="F:heme binding"/>
    <property type="evidence" value="ECO:0007669"/>
    <property type="project" value="InterPro"/>
</dbReference>
<dbReference type="GO" id="GO:0046872">
    <property type="term" value="F:metal ion binding"/>
    <property type="evidence" value="ECO:0007669"/>
    <property type="project" value="UniProtKB-KW"/>
</dbReference>
<dbReference type="GO" id="GO:0098809">
    <property type="term" value="F:nitrite reductase activity"/>
    <property type="evidence" value="ECO:0000250"/>
    <property type="project" value="UniProtKB"/>
</dbReference>
<dbReference type="GO" id="GO:0019825">
    <property type="term" value="F:oxygen binding"/>
    <property type="evidence" value="ECO:0007669"/>
    <property type="project" value="InterPro"/>
</dbReference>
<dbReference type="GO" id="GO:0005344">
    <property type="term" value="F:oxygen carrier activity"/>
    <property type="evidence" value="ECO:0000250"/>
    <property type="project" value="UniProtKB"/>
</dbReference>
<dbReference type="GO" id="GO:0004601">
    <property type="term" value="F:peroxidase activity"/>
    <property type="evidence" value="ECO:0000250"/>
    <property type="project" value="UniProtKB"/>
</dbReference>
<dbReference type="GO" id="GO:0019430">
    <property type="term" value="P:removal of superoxide radicals"/>
    <property type="evidence" value="ECO:0000250"/>
    <property type="project" value="UniProtKB"/>
</dbReference>
<dbReference type="Gene3D" id="6.10.140.2100">
    <property type="match status" value="1"/>
</dbReference>
<dbReference type="Gene3D" id="6.10.140.2110">
    <property type="match status" value="1"/>
</dbReference>
<dbReference type="InterPro" id="IPR000971">
    <property type="entry name" value="Globin"/>
</dbReference>
<dbReference type="InterPro" id="IPR009050">
    <property type="entry name" value="Globin-like_sf"/>
</dbReference>
<dbReference type="InterPro" id="IPR002335">
    <property type="entry name" value="Myoglobin"/>
</dbReference>
<dbReference type="PANTHER" id="PTHR47132">
    <property type="entry name" value="MYOGLOBIN"/>
    <property type="match status" value="1"/>
</dbReference>
<dbReference type="PANTHER" id="PTHR47132:SF1">
    <property type="entry name" value="MYOGLOBIN"/>
    <property type="match status" value="1"/>
</dbReference>
<dbReference type="Pfam" id="PF00042">
    <property type="entry name" value="Globin"/>
    <property type="match status" value="1"/>
</dbReference>
<dbReference type="PRINTS" id="PR00613">
    <property type="entry name" value="MYOGLOBIN"/>
</dbReference>
<dbReference type="SUPFAM" id="SSF46458">
    <property type="entry name" value="Globin-like"/>
    <property type="match status" value="1"/>
</dbReference>
<dbReference type="PROSITE" id="PS01033">
    <property type="entry name" value="GLOBIN"/>
    <property type="match status" value="1"/>
</dbReference>
<keyword id="KW-0963">Cytoplasm</keyword>
<keyword id="KW-0903">Direct protein sequencing</keyword>
<keyword id="KW-0349">Heme</keyword>
<keyword id="KW-0408">Iron</keyword>
<keyword id="KW-0479">Metal-binding</keyword>
<keyword id="KW-0514">Muscle protein</keyword>
<keyword id="KW-0560">Oxidoreductase</keyword>
<keyword id="KW-0561">Oxygen transport</keyword>
<keyword id="KW-0813">Transport</keyword>